<dbReference type="EC" id="2.5.1.6" evidence="5"/>
<dbReference type="EMBL" id="Z71272">
    <property type="protein sequence ID" value="CAA95857.1"/>
    <property type="molecule type" value="mRNA"/>
</dbReference>
<dbReference type="SMR" id="Q96552"/>
<dbReference type="OrthoDB" id="5852090at2759"/>
<dbReference type="BRENDA" id="2.5.1.6">
    <property type="organism ID" value="1211"/>
</dbReference>
<dbReference type="UniPathway" id="UPA00315">
    <property type="reaction ID" value="UER00080"/>
</dbReference>
<dbReference type="GO" id="GO:0005737">
    <property type="term" value="C:cytoplasm"/>
    <property type="evidence" value="ECO:0007669"/>
    <property type="project" value="UniProtKB-SubCell"/>
</dbReference>
<dbReference type="GO" id="GO:0005524">
    <property type="term" value="F:ATP binding"/>
    <property type="evidence" value="ECO:0007669"/>
    <property type="project" value="UniProtKB-KW"/>
</dbReference>
<dbReference type="GO" id="GO:0046872">
    <property type="term" value="F:metal ion binding"/>
    <property type="evidence" value="ECO:0007669"/>
    <property type="project" value="UniProtKB-KW"/>
</dbReference>
<dbReference type="GO" id="GO:0004478">
    <property type="term" value="F:methionine adenosyltransferase activity"/>
    <property type="evidence" value="ECO:0007669"/>
    <property type="project" value="UniProtKB-EC"/>
</dbReference>
<dbReference type="GO" id="GO:0006730">
    <property type="term" value="P:one-carbon metabolic process"/>
    <property type="evidence" value="ECO:0007669"/>
    <property type="project" value="UniProtKB-KW"/>
</dbReference>
<dbReference type="GO" id="GO:0006556">
    <property type="term" value="P:S-adenosylmethionine biosynthetic process"/>
    <property type="evidence" value="ECO:0007669"/>
    <property type="project" value="UniProtKB-UniPathway"/>
</dbReference>
<dbReference type="CDD" id="cd18079">
    <property type="entry name" value="S-AdoMet_synt"/>
    <property type="match status" value="1"/>
</dbReference>
<dbReference type="FunFam" id="3.30.300.10:FF:000001">
    <property type="entry name" value="S-adenosylmethionine synthase"/>
    <property type="match status" value="1"/>
</dbReference>
<dbReference type="FunFam" id="3.30.300.10:FF:000003">
    <property type="entry name" value="S-adenosylmethionine synthase"/>
    <property type="match status" value="1"/>
</dbReference>
<dbReference type="FunFam" id="3.30.300.10:FF:000004">
    <property type="entry name" value="S-adenosylmethionine synthase"/>
    <property type="match status" value="1"/>
</dbReference>
<dbReference type="Gene3D" id="3.30.300.10">
    <property type="match status" value="3"/>
</dbReference>
<dbReference type="HAMAP" id="MF_00086">
    <property type="entry name" value="S_AdoMet_synth1"/>
    <property type="match status" value="1"/>
</dbReference>
<dbReference type="InterPro" id="IPR022631">
    <property type="entry name" value="ADOMET_SYNTHASE_CS"/>
</dbReference>
<dbReference type="InterPro" id="IPR022630">
    <property type="entry name" value="S-AdoMet_synt_C"/>
</dbReference>
<dbReference type="InterPro" id="IPR022629">
    <property type="entry name" value="S-AdoMet_synt_central"/>
</dbReference>
<dbReference type="InterPro" id="IPR022628">
    <property type="entry name" value="S-AdoMet_synt_N"/>
</dbReference>
<dbReference type="InterPro" id="IPR002133">
    <property type="entry name" value="S-AdoMet_synthetase"/>
</dbReference>
<dbReference type="InterPro" id="IPR022636">
    <property type="entry name" value="S-AdoMet_synthetase_sfam"/>
</dbReference>
<dbReference type="NCBIfam" id="TIGR01034">
    <property type="entry name" value="metK"/>
    <property type="match status" value="1"/>
</dbReference>
<dbReference type="PANTHER" id="PTHR11964">
    <property type="entry name" value="S-ADENOSYLMETHIONINE SYNTHETASE"/>
    <property type="match status" value="1"/>
</dbReference>
<dbReference type="Pfam" id="PF02773">
    <property type="entry name" value="S-AdoMet_synt_C"/>
    <property type="match status" value="1"/>
</dbReference>
<dbReference type="Pfam" id="PF02772">
    <property type="entry name" value="S-AdoMet_synt_M"/>
    <property type="match status" value="1"/>
</dbReference>
<dbReference type="Pfam" id="PF00438">
    <property type="entry name" value="S-AdoMet_synt_N"/>
    <property type="match status" value="1"/>
</dbReference>
<dbReference type="PIRSF" id="PIRSF000497">
    <property type="entry name" value="MAT"/>
    <property type="match status" value="1"/>
</dbReference>
<dbReference type="SUPFAM" id="SSF55973">
    <property type="entry name" value="S-adenosylmethionine synthetase"/>
    <property type="match status" value="3"/>
</dbReference>
<dbReference type="PROSITE" id="PS00376">
    <property type="entry name" value="ADOMET_SYNTHASE_1"/>
    <property type="match status" value="1"/>
</dbReference>
<dbReference type="PROSITE" id="PS00377">
    <property type="entry name" value="ADOMET_SYNTHASE_2"/>
    <property type="match status" value="1"/>
</dbReference>
<feature type="chain" id="PRO_0000174460" description="S-adenosylmethionine synthase 2">
    <location>
        <begin position="1"/>
        <end position="393"/>
    </location>
</feature>
<feature type="binding site" evidence="3">
    <location>
        <position position="9"/>
    </location>
    <ligand>
        <name>Mg(2+)</name>
        <dbReference type="ChEBI" id="CHEBI:18420"/>
    </ligand>
</feature>
<feature type="binding site" description="in other chain" evidence="4">
    <location>
        <position position="15"/>
    </location>
    <ligand>
        <name>ATP</name>
        <dbReference type="ChEBI" id="CHEBI:30616"/>
        <note>ligand shared between two neighboring subunits</note>
    </ligand>
</feature>
<feature type="binding site" evidence="2">
    <location>
        <position position="43"/>
    </location>
    <ligand>
        <name>K(+)</name>
        <dbReference type="ChEBI" id="CHEBI:29103"/>
    </ligand>
</feature>
<feature type="binding site" description="in other chain" evidence="2">
    <location>
        <position position="56"/>
    </location>
    <ligand>
        <name>L-methionine</name>
        <dbReference type="ChEBI" id="CHEBI:57844"/>
        <note>ligand shared between two neighboring subunits</note>
    </ligand>
</feature>
<feature type="binding site" description="in other chain" evidence="2">
    <location>
        <position position="99"/>
    </location>
    <ligand>
        <name>L-methionine</name>
        <dbReference type="ChEBI" id="CHEBI:57844"/>
        <note>ligand shared between two neighboring subunits</note>
    </ligand>
</feature>
<feature type="binding site" description="in other chain" evidence="4">
    <location>
        <begin position="167"/>
        <end position="169"/>
    </location>
    <ligand>
        <name>ATP</name>
        <dbReference type="ChEBI" id="CHEBI:30616"/>
        <note>ligand shared between two neighboring subunits</note>
    </ligand>
</feature>
<feature type="binding site" description="in other chain" evidence="4">
    <location>
        <begin position="235"/>
        <end position="238"/>
    </location>
    <ligand>
        <name>ATP</name>
        <dbReference type="ChEBI" id="CHEBI:30616"/>
        <note>ligand shared between two neighboring subunits</note>
    </ligand>
</feature>
<feature type="binding site" description="in other chain" evidence="4">
    <location>
        <position position="246"/>
    </location>
    <ligand>
        <name>ATP</name>
        <dbReference type="ChEBI" id="CHEBI:30616"/>
        <note>ligand shared between two neighboring subunits</note>
    </ligand>
</feature>
<feature type="binding site" evidence="2">
    <location>
        <position position="246"/>
    </location>
    <ligand>
        <name>L-methionine</name>
        <dbReference type="ChEBI" id="CHEBI:57844"/>
        <note>ligand shared between two neighboring subunits</note>
    </ligand>
</feature>
<feature type="binding site" description="in other chain" evidence="2">
    <location>
        <begin position="252"/>
        <end position="253"/>
    </location>
    <ligand>
        <name>ATP</name>
        <dbReference type="ChEBI" id="CHEBI:30616"/>
        <note>ligand shared between two neighboring subunits</note>
    </ligand>
</feature>
<feature type="binding site" evidence="2">
    <location>
        <position position="269"/>
    </location>
    <ligand>
        <name>ATP</name>
        <dbReference type="ChEBI" id="CHEBI:30616"/>
        <note>ligand shared between two neighboring subunits</note>
    </ligand>
</feature>
<feature type="binding site" evidence="2">
    <location>
        <position position="273"/>
    </location>
    <ligand>
        <name>ATP</name>
        <dbReference type="ChEBI" id="CHEBI:30616"/>
        <note>ligand shared between two neighboring subunits</note>
    </ligand>
</feature>
<feature type="binding site" evidence="3">
    <location>
        <position position="277"/>
    </location>
    <ligand>
        <name>ATP</name>
        <dbReference type="ChEBI" id="CHEBI:30616"/>
        <note>ligand shared between two neighboring subunits</note>
    </ligand>
</feature>
<feature type="binding site" description="in other chain" evidence="2">
    <location>
        <position position="277"/>
    </location>
    <ligand>
        <name>L-methionine</name>
        <dbReference type="ChEBI" id="CHEBI:57844"/>
        <note>ligand shared between two neighboring subunits</note>
    </ligand>
</feature>
<name>METK2_CATRO</name>
<comment type="function">
    <text evidence="5">Catalyzes the formation of S-adenosylmethionine from methionine and ATP. The reaction comprises two steps that are both catalyzed by the same enzyme: formation of S-adenosylmethionine (AdoMet) and triphosphate, and subsequent hydrolysis of the triphosphate.</text>
</comment>
<comment type="catalytic activity">
    <reaction evidence="5">
        <text>L-methionine + ATP + H2O = S-adenosyl-L-methionine + phosphate + diphosphate</text>
        <dbReference type="Rhea" id="RHEA:21080"/>
        <dbReference type="ChEBI" id="CHEBI:15377"/>
        <dbReference type="ChEBI" id="CHEBI:30616"/>
        <dbReference type="ChEBI" id="CHEBI:33019"/>
        <dbReference type="ChEBI" id="CHEBI:43474"/>
        <dbReference type="ChEBI" id="CHEBI:57844"/>
        <dbReference type="ChEBI" id="CHEBI:59789"/>
        <dbReference type="EC" id="2.5.1.6"/>
    </reaction>
</comment>
<comment type="cofactor">
    <cofactor evidence="5">
        <name>Mn(2+)</name>
        <dbReference type="ChEBI" id="CHEBI:29035"/>
    </cofactor>
    <cofactor evidence="5">
        <name>Mg(2+)</name>
        <dbReference type="ChEBI" id="CHEBI:18420"/>
    </cofactor>
    <cofactor evidence="5">
        <name>Co(2+)</name>
        <dbReference type="ChEBI" id="CHEBI:48828"/>
    </cofactor>
    <text evidence="3 5">Binds 2 divalent ions per subunit. The metal ions interact primarily with the substrate (By similarity). Can utilize magnesium, manganese or cobalt (in vitro) (PubMed:9037140).</text>
</comment>
<comment type="cofactor">
    <cofactor evidence="5">
        <name>K(+)</name>
        <dbReference type="ChEBI" id="CHEBI:29103"/>
    </cofactor>
    <cofactor evidence="5">
        <name>NH4(+)</name>
        <dbReference type="ChEBI" id="CHEBI:28938"/>
    </cofactor>
    <text evidence="3 5">Binds 1 potassium ion per subunit. The potassium ion interacts primarily with the substrate (By similarity). Potassium can be replaced by NH(4) (in vitro) (PubMed:9037140).</text>
</comment>
<comment type="activity regulation">
    <text evidence="5">Inhibited by products of SAMS reaction (SAM, Pi, PPi), substrate analogs (cycloleucine and ethionine), and alternative nucleotides (GTP, CTP and ADP). Strongly repressed by PPPi.</text>
</comment>
<comment type="biophysicochemical properties">
    <kinetics>
        <KM evidence="5">109 uM for L-methionine</KM>
        <KM evidence="5">181 uM for ATP</KM>
    </kinetics>
    <phDependence>
        <text evidence="5">Optimum pH is 7-8.3.</text>
    </phDependence>
    <temperatureDependence>
        <text evidence="5">Optimum temperature is 37-45 degrees Celsius.</text>
    </temperatureDependence>
</comment>
<comment type="pathway">
    <text evidence="5">Amino-acid biosynthesis; S-adenosyl-L-methionine biosynthesis; S-adenosyl-L-methionine from L-methionine: step 1/1.</text>
</comment>
<comment type="subunit">
    <text evidence="1">Homotetramer.</text>
</comment>
<comment type="subcellular location">
    <subcellularLocation>
        <location evidence="1">Cytoplasm</location>
    </subcellularLocation>
</comment>
<comment type="tissue specificity">
    <text evidence="5">Mostly expressed in roots, and, to a lower extent, in hypocotyls and cotyledons.</text>
</comment>
<comment type="induction">
    <text evidence="5">Transiently induced by elicitors from Phytophthora megasperma, salt stress, and sucrose.</text>
</comment>
<comment type="similarity">
    <text evidence="6">Belongs to the AdoMet synthase family.</text>
</comment>
<evidence type="ECO:0000250" key="1"/>
<evidence type="ECO:0000250" key="2">
    <source>
        <dbReference type="UniProtKB" id="P0A817"/>
    </source>
</evidence>
<evidence type="ECO:0000250" key="3">
    <source>
        <dbReference type="UniProtKB" id="P13444"/>
    </source>
</evidence>
<evidence type="ECO:0000250" key="4">
    <source>
        <dbReference type="UniProtKB" id="Q00266"/>
    </source>
</evidence>
<evidence type="ECO:0000269" key="5">
    <source>
    </source>
</evidence>
<evidence type="ECO:0000305" key="6"/>
<proteinExistence type="evidence at protein level"/>
<gene>
    <name type="primary">SAMS2</name>
</gene>
<keyword id="KW-0067">ATP-binding</keyword>
<keyword id="KW-0170">Cobalt</keyword>
<keyword id="KW-0963">Cytoplasm</keyword>
<keyword id="KW-0460">Magnesium</keyword>
<keyword id="KW-0464">Manganese</keyword>
<keyword id="KW-0479">Metal-binding</keyword>
<keyword id="KW-0547">Nucleotide-binding</keyword>
<keyword id="KW-0554">One-carbon metabolism</keyword>
<keyword id="KW-0630">Potassium</keyword>
<keyword id="KW-0808">Transferase</keyword>
<protein>
    <recommendedName>
        <fullName>S-adenosylmethionine synthase 2</fullName>
        <shortName>AdoMet synthase 2</shortName>
        <ecNumber evidence="5">2.5.1.6</ecNumber>
    </recommendedName>
    <alternativeName>
        <fullName>Methionine adenosyltransferase 2</fullName>
        <shortName>MAT 2</shortName>
    </alternativeName>
</protein>
<accession>Q96552</accession>
<organism>
    <name type="scientific">Catharanthus roseus</name>
    <name type="common">Madagascar periwinkle</name>
    <name type="synonym">Vinca rosea</name>
    <dbReference type="NCBI Taxonomy" id="4058"/>
    <lineage>
        <taxon>Eukaryota</taxon>
        <taxon>Viridiplantae</taxon>
        <taxon>Streptophyta</taxon>
        <taxon>Embryophyta</taxon>
        <taxon>Tracheophyta</taxon>
        <taxon>Spermatophyta</taxon>
        <taxon>Magnoliopsida</taxon>
        <taxon>eudicotyledons</taxon>
        <taxon>Gunneridae</taxon>
        <taxon>Pentapetalae</taxon>
        <taxon>asterids</taxon>
        <taxon>lamiids</taxon>
        <taxon>Gentianales</taxon>
        <taxon>Apocynaceae</taxon>
        <taxon>Rauvolfioideae</taxon>
        <taxon>Vinceae</taxon>
        <taxon>Catharanthinae</taxon>
        <taxon>Catharanthus</taxon>
    </lineage>
</organism>
<sequence length="393" mass="43004">METFLFTSESVNEGHPDKLCDQISDAVLDACLAQDPESKVACETCTKTNMVMVFGEITTKAQVDYEKIVRDTCRAIGFVSDDVGLDADNCKVLVNIEQQSPDIAQGVHGHLTKRPEEIGAGDQGHMFGYATDETPELMPLSHVLATKLGARLTEVRKNGTCPWLRPDGKTQVTVEYYNDNGAMVPIRVHTVLISTQHDETVTNDEIAADLKEHVIKPVVPEKYLDEKTIFHLNPSGRFVIGGPHGDAGLTGRKIIIDTYGGWGAHGGGAFSGKDPTKVDRSGAYIVRQAAKSIVASGLARRCIVQVSYAIGVPEPLSVFVDTYGTGKIPDKEILKIVKENFDFRPGMIAINLDLKRGGNSRFLKTAAYGHFGREDPDFTWEVVKPLKFEKVEA</sequence>
<reference key="1">
    <citation type="journal article" date="1997" name="Plant Mol. Biol.">
        <title>Three differentially expressed S-adenosylmethionine synthetases from Catharanthus roseus: molecular and functional characterization.</title>
        <authorList>
            <person name="Schroeder G."/>
            <person name="Eichel J."/>
            <person name="Breinig S."/>
            <person name="Schroeder J."/>
        </authorList>
    </citation>
    <scope>NUCLEOTIDE SEQUENCE [MRNA]</scope>
    <scope>FUNCTION</scope>
    <scope>CATALYTIC ACTIVITY</scope>
    <scope>COFACTOR</scope>
    <scope>BIOPHYSICOCHEMICAL PROPERTIES</scope>
    <scope>ACTIVITY REGULATION</scope>
    <scope>TISSUE SPECIFICITY</scope>
    <scope>PATHWAY</scope>
    <scope>INDUCTION</scope>
</reference>